<keyword id="KW-0067">ATP-binding</keyword>
<keyword id="KW-0997">Cell inner membrane</keyword>
<keyword id="KW-1003">Cell membrane</keyword>
<keyword id="KW-0472">Membrane</keyword>
<keyword id="KW-0547">Nucleotide-binding</keyword>
<keyword id="KW-0614">Plasmid</keyword>
<keyword id="KW-1185">Reference proteome</keyword>
<keyword id="KW-1278">Translocase</keyword>
<keyword id="KW-0813">Transport</keyword>
<evidence type="ECO:0000255" key="1">
    <source>
        <dbReference type="HAMAP-Rule" id="MF_01714"/>
    </source>
</evidence>
<dbReference type="EC" id="7.6.2.7" evidence="1"/>
<dbReference type="EMBL" id="AL591985">
    <property type="protein sequence ID" value="CAC49366.1"/>
    <property type="molecule type" value="Genomic_DNA"/>
</dbReference>
<dbReference type="PIR" id="F95962">
    <property type="entry name" value="F95962"/>
</dbReference>
<dbReference type="RefSeq" id="NP_437506.1">
    <property type="nucleotide sequence ID" value="NC_003078.1"/>
</dbReference>
<dbReference type="RefSeq" id="WP_010975810.1">
    <property type="nucleotide sequence ID" value="NC_003078.1"/>
</dbReference>
<dbReference type="SMR" id="Q92UX0"/>
<dbReference type="EnsemblBacteria" id="CAC49366">
    <property type="protein sequence ID" value="CAC49366"/>
    <property type="gene ID" value="SM_b21527"/>
</dbReference>
<dbReference type="KEGG" id="sme:SM_b21527"/>
<dbReference type="PATRIC" id="fig|266834.11.peg.5893"/>
<dbReference type="eggNOG" id="COG4525">
    <property type="taxonomic scope" value="Bacteria"/>
</dbReference>
<dbReference type="HOGENOM" id="CLU_000604_1_22_5"/>
<dbReference type="OrthoDB" id="9807242at2"/>
<dbReference type="PRO" id="PR:Q92UX0"/>
<dbReference type="Proteomes" id="UP000001976">
    <property type="component" value="Plasmid pSymB"/>
</dbReference>
<dbReference type="GO" id="GO:0005886">
    <property type="term" value="C:plasma membrane"/>
    <property type="evidence" value="ECO:0007669"/>
    <property type="project" value="UniProtKB-SubCell"/>
</dbReference>
<dbReference type="GO" id="GO:0015411">
    <property type="term" value="F:ABC-type taurine transporter transporter activity"/>
    <property type="evidence" value="ECO:0007669"/>
    <property type="project" value="UniProtKB-EC"/>
</dbReference>
<dbReference type="GO" id="GO:0005524">
    <property type="term" value="F:ATP binding"/>
    <property type="evidence" value="ECO:0007669"/>
    <property type="project" value="UniProtKB-KW"/>
</dbReference>
<dbReference type="GO" id="GO:0016887">
    <property type="term" value="F:ATP hydrolysis activity"/>
    <property type="evidence" value="ECO:0007669"/>
    <property type="project" value="InterPro"/>
</dbReference>
<dbReference type="CDD" id="cd03293">
    <property type="entry name" value="ABC_NrtD_SsuB_transporters"/>
    <property type="match status" value="1"/>
</dbReference>
<dbReference type="Gene3D" id="3.40.50.300">
    <property type="entry name" value="P-loop containing nucleotide triphosphate hydrolases"/>
    <property type="match status" value="1"/>
</dbReference>
<dbReference type="InterPro" id="IPR003593">
    <property type="entry name" value="AAA+_ATPase"/>
</dbReference>
<dbReference type="InterPro" id="IPR003439">
    <property type="entry name" value="ABC_transporter-like_ATP-bd"/>
</dbReference>
<dbReference type="InterPro" id="IPR017871">
    <property type="entry name" value="ABC_transporter-like_CS"/>
</dbReference>
<dbReference type="InterPro" id="IPR050166">
    <property type="entry name" value="ABC_transporter_ATP-bind"/>
</dbReference>
<dbReference type="InterPro" id="IPR027417">
    <property type="entry name" value="P-loop_NTPase"/>
</dbReference>
<dbReference type="PANTHER" id="PTHR42788:SF18">
    <property type="entry name" value="TAURINE IMPORT ATP-BINDING PROTEIN TAUB"/>
    <property type="match status" value="1"/>
</dbReference>
<dbReference type="PANTHER" id="PTHR42788">
    <property type="entry name" value="TAURINE IMPORT ATP-BINDING PROTEIN-RELATED"/>
    <property type="match status" value="1"/>
</dbReference>
<dbReference type="Pfam" id="PF00005">
    <property type="entry name" value="ABC_tran"/>
    <property type="match status" value="1"/>
</dbReference>
<dbReference type="SMART" id="SM00382">
    <property type="entry name" value="AAA"/>
    <property type="match status" value="1"/>
</dbReference>
<dbReference type="SUPFAM" id="SSF52540">
    <property type="entry name" value="P-loop containing nucleoside triphosphate hydrolases"/>
    <property type="match status" value="1"/>
</dbReference>
<dbReference type="PROSITE" id="PS00211">
    <property type="entry name" value="ABC_TRANSPORTER_1"/>
    <property type="match status" value="1"/>
</dbReference>
<dbReference type="PROSITE" id="PS50893">
    <property type="entry name" value="ABC_TRANSPORTER_2"/>
    <property type="match status" value="1"/>
</dbReference>
<dbReference type="PROSITE" id="PS51250">
    <property type="entry name" value="TAUB"/>
    <property type="match status" value="1"/>
</dbReference>
<organism>
    <name type="scientific">Rhizobium meliloti (strain 1021)</name>
    <name type="common">Ensifer meliloti</name>
    <name type="synonym">Sinorhizobium meliloti</name>
    <dbReference type="NCBI Taxonomy" id="266834"/>
    <lineage>
        <taxon>Bacteria</taxon>
        <taxon>Pseudomonadati</taxon>
        <taxon>Pseudomonadota</taxon>
        <taxon>Alphaproteobacteria</taxon>
        <taxon>Hyphomicrobiales</taxon>
        <taxon>Rhizobiaceae</taxon>
        <taxon>Sinorhizobium/Ensifer group</taxon>
        <taxon>Sinorhizobium</taxon>
    </lineage>
</organism>
<geneLocation type="plasmid">
    <name>pSymB</name>
    <name>megaplasmid 2</name>
</geneLocation>
<name>TAUB_RHIME</name>
<gene>
    <name evidence="1" type="primary">tauB</name>
    <name type="ordered locus">RB0966</name>
    <name type="ORF">SMb21527</name>
</gene>
<proteinExistence type="inferred from homology"/>
<comment type="function">
    <text evidence="1">Part of the ABC transporter complex TauABC involved in taurine import. Responsible for energy coupling to the transport system.</text>
</comment>
<comment type="catalytic activity">
    <reaction evidence="1">
        <text>taurine(out) + ATP + H2O = taurine(in) + ADP + phosphate + H(+)</text>
        <dbReference type="Rhea" id="RHEA:14613"/>
        <dbReference type="ChEBI" id="CHEBI:15377"/>
        <dbReference type="ChEBI" id="CHEBI:15378"/>
        <dbReference type="ChEBI" id="CHEBI:30616"/>
        <dbReference type="ChEBI" id="CHEBI:43474"/>
        <dbReference type="ChEBI" id="CHEBI:456216"/>
        <dbReference type="ChEBI" id="CHEBI:507393"/>
        <dbReference type="EC" id="7.6.2.7"/>
    </reaction>
</comment>
<comment type="subunit">
    <text evidence="1">The complex is composed of two ATP-binding proteins (TauB), two transmembrane proteins (TauC) and a solute-binding protein (TauA).</text>
</comment>
<comment type="subcellular location">
    <subcellularLocation>
        <location evidence="1">Cell inner membrane</location>
        <topology evidence="1">Peripheral membrane protein</topology>
    </subcellularLocation>
</comment>
<comment type="similarity">
    <text evidence="1">Belongs to the ABC transporter superfamily. Taurine importer (TC 3.A.1.17.1) family.</text>
</comment>
<accession>Q92UX0</accession>
<protein>
    <recommendedName>
        <fullName evidence="1">Taurine import ATP-binding protein TauB</fullName>
        <ecNumber evidence="1">7.6.2.7</ecNumber>
    </recommendedName>
</protein>
<sequence length="270" mass="29962">METLNVSNVSLTYPGLYSDQAVIALKGVNLEIKSGDFVVALGASGCGKTTLLNLMAGFMAPSDGEIMLGDRRITGPGADRGVVFQKHALLPWLNVIDNTEFGLKLRGVDKATRRDLATRNLALVGLQDFHRHMIYHLSGGMQQRVGIARALTCDPAMLLMDEPMAALDALTRETIQELLLEVWQLTNKMFFFITHSVEEALFLGSRLIVMSPRPGRITHTYELDFNKRFLENGNARAIKSSRDFIDMREEILGIIYGDELQSGNPELLHA</sequence>
<feature type="chain" id="PRO_0000093016" description="Taurine import ATP-binding protein TauB">
    <location>
        <begin position="1"/>
        <end position="270"/>
    </location>
</feature>
<feature type="domain" description="ABC transporter" evidence="1">
    <location>
        <begin position="4"/>
        <end position="237"/>
    </location>
</feature>
<feature type="binding site" evidence="1">
    <location>
        <begin position="42"/>
        <end position="49"/>
    </location>
    <ligand>
        <name>ATP</name>
        <dbReference type="ChEBI" id="CHEBI:30616"/>
    </ligand>
</feature>
<reference key="1">
    <citation type="journal article" date="2001" name="Proc. Natl. Acad. Sci. U.S.A.">
        <title>The complete sequence of the 1,683-kb pSymB megaplasmid from the N2-fixing endosymbiont Sinorhizobium meliloti.</title>
        <authorList>
            <person name="Finan T.M."/>
            <person name="Weidner S."/>
            <person name="Wong K."/>
            <person name="Buhrmester J."/>
            <person name="Chain P."/>
            <person name="Vorhoelter F.J."/>
            <person name="Hernandez-Lucas I."/>
            <person name="Becker A."/>
            <person name="Cowie A."/>
            <person name="Gouzy J."/>
            <person name="Golding B."/>
            <person name="Puehler A."/>
        </authorList>
    </citation>
    <scope>NUCLEOTIDE SEQUENCE [LARGE SCALE GENOMIC DNA]</scope>
    <source>
        <strain>1021</strain>
    </source>
</reference>
<reference key="2">
    <citation type="journal article" date="2001" name="Science">
        <title>The composite genome of the legume symbiont Sinorhizobium meliloti.</title>
        <authorList>
            <person name="Galibert F."/>
            <person name="Finan T.M."/>
            <person name="Long S.R."/>
            <person name="Puehler A."/>
            <person name="Abola P."/>
            <person name="Ampe F."/>
            <person name="Barloy-Hubler F."/>
            <person name="Barnett M.J."/>
            <person name="Becker A."/>
            <person name="Boistard P."/>
            <person name="Bothe G."/>
            <person name="Boutry M."/>
            <person name="Bowser L."/>
            <person name="Buhrmester J."/>
            <person name="Cadieu E."/>
            <person name="Capela D."/>
            <person name="Chain P."/>
            <person name="Cowie A."/>
            <person name="Davis R.W."/>
            <person name="Dreano S."/>
            <person name="Federspiel N.A."/>
            <person name="Fisher R.F."/>
            <person name="Gloux S."/>
            <person name="Godrie T."/>
            <person name="Goffeau A."/>
            <person name="Golding B."/>
            <person name="Gouzy J."/>
            <person name="Gurjal M."/>
            <person name="Hernandez-Lucas I."/>
            <person name="Hong A."/>
            <person name="Huizar L."/>
            <person name="Hyman R.W."/>
            <person name="Jones T."/>
            <person name="Kahn D."/>
            <person name="Kahn M.L."/>
            <person name="Kalman S."/>
            <person name="Keating D.H."/>
            <person name="Kiss E."/>
            <person name="Komp C."/>
            <person name="Lelaure V."/>
            <person name="Masuy D."/>
            <person name="Palm C."/>
            <person name="Peck M.C."/>
            <person name="Pohl T.M."/>
            <person name="Portetelle D."/>
            <person name="Purnelle B."/>
            <person name="Ramsperger U."/>
            <person name="Surzycki R."/>
            <person name="Thebault P."/>
            <person name="Vandenbol M."/>
            <person name="Vorhoelter F.J."/>
            <person name="Weidner S."/>
            <person name="Wells D.H."/>
            <person name="Wong K."/>
            <person name="Yeh K.-C."/>
            <person name="Batut J."/>
        </authorList>
    </citation>
    <scope>NUCLEOTIDE SEQUENCE [LARGE SCALE GENOMIC DNA]</scope>
    <source>
        <strain>1021</strain>
    </source>
</reference>